<name>HMAL1_YEAST</name>
<accession>P0CY07</accession>
<accession>D6VQV3</accession>
<accession>P01365</accession>
<dbReference type="EMBL" id="V01315">
    <property type="protein sequence ID" value="CAA24626.1"/>
    <property type="molecule type" value="Genomic_DNA"/>
</dbReference>
<dbReference type="EMBL" id="L00059">
    <property type="protein sequence ID" value="AAA34679.1"/>
    <property type="molecule type" value="Genomic_DNA"/>
</dbReference>
<dbReference type="EMBL" id="X59720">
    <property type="protein sequence ID" value="CAA42307.1"/>
    <property type="molecule type" value="Genomic_DNA"/>
</dbReference>
<dbReference type="EMBL" id="AY557643">
    <property type="protein sequence ID" value="AAS55969.1"/>
    <property type="molecule type" value="Genomic_DNA"/>
</dbReference>
<dbReference type="EMBL" id="V01314">
    <property type="protein sequence ID" value="CAA24624.1"/>
    <property type="molecule type" value="Genomic_DNA"/>
</dbReference>
<dbReference type="EMBL" id="BK006937">
    <property type="protein sequence ID" value="DAA07519.1"/>
    <property type="molecule type" value="Genomic_DNA"/>
</dbReference>
<dbReference type="PIR" id="S19397">
    <property type="entry name" value="JFBYA1"/>
</dbReference>
<dbReference type="RefSeq" id="NP_009867.1">
    <property type="nucleotide sequence ID" value="NM_001178707.1"/>
</dbReference>
<dbReference type="BioGRID" id="30923">
    <property type="interactions" value="7"/>
</dbReference>
<dbReference type="BioGRID" id="31023">
    <property type="interactions" value="4"/>
</dbReference>
<dbReference type="FunCoup" id="P0CY07">
    <property type="interactions" value="55"/>
</dbReference>
<dbReference type="STRING" id="4932.YCL066W"/>
<dbReference type="iPTMnet" id="P0CY07"/>
<dbReference type="PaxDb" id="4932-YCL066W"/>
<dbReference type="EnsemblFungi" id="YCL066W_mRNA">
    <property type="protein sequence ID" value="YCL066W"/>
    <property type="gene ID" value="YCL066W"/>
</dbReference>
<dbReference type="EnsemblFungi" id="YCR040W_mRNA">
    <property type="protein sequence ID" value="YCR040W"/>
    <property type="gene ID" value="YCR040W"/>
</dbReference>
<dbReference type="GeneID" id="850293"/>
<dbReference type="KEGG" id="sce:YCL066W"/>
<dbReference type="KEGG" id="sce:YCR040W"/>
<dbReference type="AGR" id="SGD:S000000571"/>
<dbReference type="SGD" id="S000000571">
    <property type="gene designation" value="HMLALPHA1"/>
</dbReference>
<dbReference type="VEuPathDB" id="FungiDB:YCL066W"/>
<dbReference type="VEuPathDB" id="FungiDB:YCR040W"/>
<dbReference type="eggNOG" id="ENOG502S4ZK">
    <property type="taxonomic scope" value="Eukaryota"/>
</dbReference>
<dbReference type="GeneTree" id="ENSGT00940000176443"/>
<dbReference type="HOGENOM" id="CLU_118234_0_0_1"/>
<dbReference type="InParanoid" id="P0CY07"/>
<dbReference type="OMA" id="MSSTIYC"/>
<dbReference type="OrthoDB" id="5398665at2759"/>
<dbReference type="BioCyc" id="YEAST:G3O-29313-MONOMER"/>
<dbReference type="PRO" id="PR:P0CY07"/>
<dbReference type="Proteomes" id="UP000002311">
    <property type="component" value="Chromosome III"/>
</dbReference>
<dbReference type="RNAct" id="P0CY07">
    <property type="molecule type" value="protein"/>
</dbReference>
<dbReference type="GO" id="GO:0005634">
    <property type="term" value="C:nucleus"/>
    <property type="evidence" value="ECO:0000247"/>
    <property type="project" value="SGD"/>
</dbReference>
<dbReference type="GO" id="GO:0008301">
    <property type="term" value="F:DNA binding, bending"/>
    <property type="evidence" value="ECO:0000247"/>
    <property type="project" value="SGD"/>
</dbReference>
<dbReference type="GO" id="GO:0003713">
    <property type="term" value="F:transcription coactivator activity"/>
    <property type="evidence" value="ECO:0000247"/>
    <property type="project" value="SGD"/>
</dbReference>
<dbReference type="GO" id="GO:0045895">
    <property type="term" value="P:positive regulation of mating-type specific transcription, DNA-templated"/>
    <property type="evidence" value="ECO:0007669"/>
    <property type="project" value="InterPro"/>
</dbReference>
<dbReference type="GO" id="GO:0007532">
    <property type="term" value="P:regulation of mating-type specific transcription, DNA-templated"/>
    <property type="evidence" value="ECO:0000247"/>
    <property type="project" value="SGD"/>
</dbReference>
<dbReference type="GO" id="GO:0006357">
    <property type="term" value="P:regulation of transcription by RNA polymerase II"/>
    <property type="evidence" value="ECO:0000247"/>
    <property type="project" value="SGD"/>
</dbReference>
<dbReference type="InterPro" id="IPR006856">
    <property type="entry name" value="MATalpha_HMGbox"/>
</dbReference>
<dbReference type="Pfam" id="PF04769">
    <property type="entry name" value="MATalpha_HMGbox"/>
    <property type="match status" value="1"/>
</dbReference>
<dbReference type="PROSITE" id="PS51325">
    <property type="entry name" value="ALPHA_BOX"/>
    <property type="match status" value="1"/>
</dbReference>
<organism>
    <name type="scientific">Saccharomyces cerevisiae (strain ATCC 204508 / S288c)</name>
    <name type="common">Baker's yeast</name>
    <dbReference type="NCBI Taxonomy" id="559292"/>
    <lineage>
        <taxon>Eukaryota</taxon>
        <taxon>Fungi</taxon>
        <taxon>Dikarya</taxon>
        <taxon>Ascomycota</taxon>
        <taxon>Saccharomycotina</taxon>
        <taxon>Saccharomycetes</taxon>
        <taxon>Saccharomycetales</taxon>
        <taxon>Saccharomycetaceae</taxon>
        <taxon>Saccharomyces</taxon>
    </lineage>
</organism>
<proteinExistence type="inferred from homology"/>
<gene>
    <name type="primary">HMLALPHA1</name>
    <name type="ordered locus">YCL066W</name>
    <name type="ORF">YCL66W</name>
</gene>
<feature type="chain" id="PRO_0000410462" description="Silenced mating-type protein ALPHA1">
    <location>
        <begin position="1"/>
        <end position="175"/>
    </location>
</feature>
<feature type="DNA-binding region" description="Alpha box" evidence="1">
    <location>
        <begin position="88"/>
        <end position="144"/>
    </location>
</feature>
<sequence length="175" mass="20413">MFTSKPAFKIKNKASKSYRNTAVSKKLKEKRLAEHVRPSCFNIIRPLKKDIQIPVPSSRFLNKIQIHRIASGSQNTQFRQFNKTSIKSSKKYLNSFMAFRAYYSQFGSGVKQNVLSSLLAEEWHADKMQHGIWDYFAQQYNFINPGFGFVEWLTNNYAEVRGDGYWEDVFVHLAL</sequence>
<keyword id="KW-0010">Activator</keyword>
<keyword id="KW-0238">DNA-binding</keyword>
<keyword id="KW-0539">Nucleus</keyword>
<keyword id="KW-1185">Reference proteome</keyword>
<keyword id="KW-0804">Transcription</keyword>
<keyword id="KW-0805">Transcription regulation</keyword>
<protein>
    <recommendedName>
        <fullName>Silenced mating-type protein ALPHA1</fullName>
        <shortName>MATalpha1 protein</shortName>
    </recommendedName>
    <alternativeName>
        <fullName>Alpha-1 activator</fullName>
    </alternativeName>
</protein>
<evidence type="ECO:0000255" key="1">
    <source>
        <dbReference type="PROSITE-ProRule" id="PRU00655"/>
    </source>
</evidence>
<reference key="1">
    <citation type="journal article" date="1981" name="Cell">
        <title>The sequence of the DNAs coding for the mating-type loci of Saccharomyces cerevisiae.</title>
        <authorList>
            <person name="Astell C.R."/>
            <person name="Ahlstrom-Jonasson L."/>
            <person name="Smith M."/>
            <person name="Tatchell K."/>
            <person name="Nasmyth K.A."/>
            <person name="Hall B.D."/>
        </authorList>
    </citation>
    <scope>NUCLEOTIDE SEQUENCE [GENOMIC DNA]</scope>
</reference>
<reference key="2">
    <citation type="journal article" date="1981" name="Cell">
        <title>In vitro mutation analysis of the mating-type locus in yeast.</title>
        <authorList>
            <person name="Tatchell K."/>
            <person name="Nasmyth K.A."/>
            <person name="Hall B.D."/>
            <person name="Astell C.R."/>
            <person name="Smith M."/>
        </authorList>
    </citation>
    <scope>NUCLEOTIDE SEQUENCE [GENOMIC DNA]</scope>
</reference>
<reference key="3">
    <citation type="journal article" date="1981" name="Cold Spring Harb. Symp. Quant. Biol.">
        <title>Physical analysis of mating-type loci in Saccharomyces cerevisiae.</title>
        <authorList>
            <person name="Nasmyth K.A."/>
            <person name="Tatchell K."/>
            <person name="Hall B.D."/>
            <person name="Astell C."/>
            <person name="Smith M."/>
        </authorList>
    </citation>
    <scope>NUCLEOTIDE SEQUENCE [GENOMIC DNA]</scope>
</reference>
<reference key="4">
    <citation type="journal article" date="1992" name="Nature">
        <title>The complete DNA sequence of yeast chromosome III.</title>
        <authorList>
            <person name="Oliver S.G."/>
            <person name="van der Aart Q.J.M."/>
            <person name="Agostoni-Carbone M.L."/>
            <person name="Aigle M."/>
            <person name="Alberghina L."/>
            <person name="Alexandraki D."/>
            <person name="Antoine G."/>
            <person name="Anwar R."/>
            <person name="Ballesta J.P.G."/>
            <person name="Benit P."/>
            <person name="Berben G."/>
            <person name="Bergantino E."/>
            <person name="Biteau N."/>
            <person name="Bolle P.-A."/>
            <person name="Bolotin-Fukuhara M."/>
            <person name="Brown A."/>
            <person name="Brown A.J.P."/>
            <person name="Buhler J.-M."/>
            <person name="Carcano C."/>
            <person name="Carignani G."/>
            <person name="Cederberg H."/>
            <person name="Chanet R."/>
            <person name="Contreras R."/>
            <person name="Crouzet M."/>
            <person name="Daignan-Fornier B."/>
            <person name="Defoor E."/>
            <person name="Delgado M.D."/>
            <person name="Demolder J."/>
            <person name="Doira C."/>
            <person name="Dubois E."/>
            <person name="Dujon B."/>
            <person name="Duesterhoeft A."/>
            <person name="Erdmann D."/>
            <person name="Esteban M."/>
            <person name="Fabre F."/>
            <person name="Fairhead C."/>
            <person name="Faye G."/>
            <person name="Feldmann H."/>
            <person name="Fiers W."/>
            <person name="Francingues-Gaillard M.-C."/>
            <person name="Franco L."/>
            <person name="Frontali L."/>
            <person name="Fukuhara H."/>
            <person name="Fuller L.J."/>
            <person name="Galland P."/>
            <person name="Gent M.E."/>
            <person name="Gigot D."/>
            <person name="Gilliquet V."/>
            <person name="Glansdorff N."/>
            <person name="Goffeau A."/>
            <person name="Grenson M."/>
            <person name="Grisanti P."/>
            <person name="Grivell L.A."/>
            <person name="de Haan M."/>
            <person name="Haasemann M."/>
            <person name="Hatat D."/>
            <person name="Hoenicka J."/>
            <person name="Hegemann J.H."/>
            <person name="Herbert C.J."/>
            <person name="Hilger F."/>
            <person name="Hohmann S."/>
            <person name="Hollenberg C.P."/>
            <person name="Huse K."/>
            <person name="Iborra F."/>
            <person name="Indge K.J."/>
            <person name="Isono K."/>
            <person name="Jacq C."/>
            <person name="Jacquet M."/>
            <person name="James C.M."/>
            <person name="Jauniaux J.-C."/>
            <person name="Jia Y."/>
            <person name="Jimenez A."/>
            <person name="Kelly A."/>
            <person name="Kleinhans U."/>
            <person name="Kreisl P."/>
            <person name="Lanfranchi G."/>
            <person name="Lewis C."/>
            <person name="van der Linden C.G."/>
            <person name="Lucchini G."/>
            <person name="Lutzenkirchen K."/>
            <person name="Maat M.J."/>
            <person name="Mallet L."/>
            <person name="Mannhaupt G."/>
            <person name="Martegani E."/>
            <person name="Mathieu A."/>
            <person name="Maurer C.T.C."/>
            <person name="McConnell D."/>
            <person name="McKee R.A."/>
            <person name="Messenguy F."/>
            <person name="Mewes H.-W."/>
            <person name="Molemans F."/>
            <person name="Montague M.A."/>
            <person name="Muzi Falconi M."/>
            <person name="Navas L."/>
            <person name="Newlon C.S."/>
            <person name="Noone D."/>
            <person name="Pallier C."/>
            <person name="Panzeri L."/>
            <person name="Pearson B.M."/>
            <person name="Perea J."/>
            <person name="Philippsen P."/>
            <person name="Pierard A."/>
            <person name="Planta R.J."/>
            <person name="Plevani P."/>
            <person name="Poetsch B."/>
            <person name="Pohl F.M."/>
            <person name="Purnelle B."/>
            <person name="Ramezani Rad M."/>
            <person name="Rasmussen S.W."/>
            <person name="Raynal A."/>
            <person name="Remacha M.A."/>
            <person name="Richterich P."/>
            <person name="Roberts A.B."/>
            <person name="Rodriguez F."/>
            <person name="Sanz E."/>
            <person name="Schaaff-Gerstenschlaeger I."/>
            <person name="Scherens B."/>
            <person name="Schweitzer B."/>
            <person name="Shu Y."/>
            <person name="Skala J."/>
            <person name="Slonimski P.P."/>
            <person name="Sor F."/>
            <person name="Soustelle C."/>
            <person name="Spiegelberg R."/>
            <person name="Stateva L.I."/>
            <person name="Steensma H.Y."/>
            <person name="Steiner S."/>
            <person name="Thierry A."/>
            <person name="Thireos G."/>
            <person name="Tzermia M."/>
            <person name="Urrestarazu L.A."/>
            <person name="Valle G."/>
            <person name="Vetter I."/>
            <person name="van Vliet-Reedijk J.C."/>
            <person name="Voet M."/>
            <person name="Volckaert G."/>
            <person name="Vreken P."/>
            <person name="Wang H."/>
            <person name="Warmington J.R."/>
            <person name="von Wettstein D."/>
            <person name="Wicksteed B.L."/>
            <person name="Wilson C."/>
            <person name="Wurst H."/>
            <person name="Xu G."/>
            <person name="Yoshikawa A."/>
            <person name="Zimmermann F.K."/>
            <person name="Sgouros J.G."/>
        </authorList>
    </citation>
    <scope>NUCLEOTIDE SEQUENCE [LARGE SCALE GENOMIC DNA]</scope>
    <source>
        <strain>ATCC 204508 / S288c</strain>
    </source>
</reference>
<reference key="5">
    <citation type="journal article" date="2014" name="G3 (Bethesda)">
        <title>The reference genome sequence of Saccharomyces cerevisiae: Then and now.</title>
        <authorList>
            <person name="Engel S.R."/>
            <person name="Dietrich F.S."/>
            <person name="Fisk D.G."/>
            <person name="Binkley G."/>
            <person name="Balakrishnan R."/>
            <person name="Costanzo M.C."/>
            <person name="Dwight S.S."/>
            <person name="Hitz B.C."/>
            <person name="Karra K."/>
            <person name="Nash R.S."/>
            <person name="Weng S."/>
            <person name="Wong E.D."/>
            <person name="Lloyd P."/>
            <person name="Skrzypek M.S."/>
            <person name="Miyasato S.R."/>
            <person name="Simison M."/>
            <person name="Cherry J.M."/>
        </authorList>
    </citation>
    <scope>GENOME REANNOTATION</scope>
    <source>
        <strain>ATCC 204508 / S288c</strain>
    </source>
</reference>
<reference key="6">
    <citation type="journal article" date="2007" name="Genome Res.">
        <title>Approaching a complete repository of sequence-verified protein-encoding clones for Saccharomyces cerevisiae.</title>
        <authorList>
            <person name="Hu Y."/>
            <person name="Rolfs A."/>
            <person name="Bhullar B."/>
            <person name="Murthy T.V.S."/>
            <person name="Zhu C."/>
            <person name="Berger M.F."/>
            <person name="Camargo A.A."/>
            <person name="Kelley F."/>
            <person name="McCarron S."/>
            <person name="Jepson D."/>
            <person name="Richardson A."/>
            <person name="Raphael J."/>
            <person name="Moreira D."/>
            <person name="Taycher E."/>
            <person name="Zuo D."/>
            <person name="Mohr S."/>
            <person name="Kane M.F."/>
            <person name="Williamson J."/>
            <person name="Simpson A.J.G."/>
            <person name="Bulyk M.L."/>
            <person name="Harlow E."/>
            <person name="Marsischky G."/>
            <person name="Kolodner R.D."/>
            <person name="LaBaer J."/>
        </authorList>
    </citation>
    <scope>NUCLEOTIDE SEQUENCE [GENOMIC DNA]</scope>
    <source>
        <strain>ATCC 204508 / S288c</strain>
    </source>
</reference>
<reference key="7">
    <citation type="journal article" date="1981" name="Nature">
        <title>A position effect in the control of transcription at yeast mating type loci.</title>
        <authorList>
            <person name="Nasmyth K.A."/>
            <person name="Tatchell K."/>
            <person name="Hall B.D."/>
            <person name="Astell C.R."/>
            <person name="Smith M."/>
        </authorList>
    </citation>
    <scope>NUCLEOTIDE SEQUENCE [GENOMIC DNA] OF 1-23</scope>
</reference>
<comment type="function">
    <text>Mating type proteins are sequence specific DNA-binding proteins that act as master switches in yeast differentiation by controlling gene expression in a cell type-specific fashion. Silenced copy of ALPHA1 at HML.</text>
</comment>
<comment type="subcellular location">
    <subcellularLocation>
        <location evidence="1">Nucleus</location>
    </subcellularLocation>
</comment>
<comment type="miscellaneous">
    <text>There are three genetic loci for mating type genes in S.cerevisiae. MAT is the expression locus that determines the mating type of the cell, whereas HML (containing HMLALPHA1 and HMLALPHA2) and HMR (containing HMRA1 and HMRA2) represent silenced repositories of mating type information. The mating type is determined by the MAT locus, which contains either a copy of HML or of HMR. Diploid cells are usually heterozygous for the MAT locus.</text>
</comment>
<comment type="similarity">
    <text evidence="1">Belongs to the MATALPHA1 family.</text>
</comment>